<proteinExistence type="inferred from homology"/>
<evidence type="ECO:0000255" key="1">
    <source>
        <dbReference type="HAMAP-Rule" id="MF_00270"/>
    </source>
</evidence>
<evidence type="ECO:0000305" key="2"/>
<accession>B1XTM7</accession>
<keyword id="KW-0687">Ribonucleoprotein</keyword>
<keyword id="KW-0689">Ribosomal protein</keyword>
<keyword id="KW-0694">RNA-binding</keyword>
<keyword id="KW-0699">rRNA-binding</keyword>
<dbReference type="EMBL" id="CP001010">
    <property type="protein sequence ID" value="ACB43704.1"/>
    <property type="molecule type" value="Genomic_DNA"/>
</dbReference>
<dbReference type="SMR" id="B1XTM7"/>
<dbReference type="STRING" id="452638.Pnec_0430"/>
<dbReference type="KEGG" id="pne:Pnec_0430"/>
<dbReference type="eggNOG" id="COG0238">
    <property type="taxonomic scope" value="Bacteria"/>
</dbReference>
<dbReference type="HOGENOM" id="CLU_148710_0_3_4"/>
<dbReference type="OrthoDB" id="9812008at2"/>
<dbReference type="GO" id="GO:0022627">
    <property type="term" value="C:cytosolic small ribosomal subunit"/>
    <property type="evidence" value="ECO:0007669"/>
    <property type="project" value="TreeGrafter"/>
</dbReference>
<dbReference type="GO" id="GO:0070181">
    <property type="term" value="F:small ribosomal subunit rRNA binding"/>
    <property type="evidence" value="ECO:0007669"/>
    <property type="project" value="TreeGrafter"/>
</dbReference>
<dbReference type="GO" id="GO:0003735">
    <property type="term" value="F:structural constituent of ribosome"/>
    <property type="evidence" value="ECO:0007669"/>
    <property type="project" value="InterPro"/>
</dbReference>
<dbReference type="GO" id="GO:0006412">
    <property type="term" value="P:translation"/>
    <property type="evidence" value="ECO:0007669"/>
    <property type="project" value="UniProtKB-UniRule"/>
</dbReference>
<dbReference type="Gene3D" id="4.10.640.10">
    <property type="entry name" value="Ribosomal protein S18"/>
    <property type="match status" value="1"/>
</dbReference>
<dbReference type="HAMAP" id="MF_00270">
    <property type="entry name" value="Ribosomal_bS18"/>
    <property type="match status" value="1"/>
</dbReference>
<dbReference type="InterPro" id="IPR001648">
    <property type="entry name" value="Ribosomal_bS18"/>
</dbReference>
<dbReference type="InterPro" id="IPR018275">
    <property type="entry name" value="Ribosomal_bS18_CS"/>
</dbReference>
<dbReference type="InterPro" id="IPR036870">
    <property type="entry name" value="Ribosomal_bS18_sf"/>
</dbReference>
<dbReference type="NCBIfam" id="TIGR00165">
    <property type="entry name" value="S18"/>
    <property type="match status" value="1"/>
</dbReference>
<dbReference type="PANTHER" id="PTHR13479">
    <property type="entry name" value="30S RIBOSOMAL PROTEIN S18"/>
    <property type="match status" value="1"/>
</dbReference>
<dbReference type="PANTHER" id="PTHR13479:SF40">
    <property type="entry name" value="SMALL RIBOSOMAL SUBUNIT PROTEIN BS18M"/>
    <property type="match status" value="1"/>
</dbReference>
<dbReference type="Pfam" id="PF01084">
    <property type="entry name" value="Ribosomal_S18"/>
    <property type="match status" value="1"/>
</dbReference>
<dbReference type="PRINTS" id="PR00974">
    <property type="entry name" value="RIBOSOMALS18"/>
</dbReference>
<dbReference type="SUPFAM" id="SSF46911">
    <property type="entry name" value="Ribosomal protein S18"/>
    <property type="match status" value="1"/>
</dbReference>
<dbReference type="PROSITE" id="PS00057">
    <property type="entry name" value="RIBOSOMAL_S18"/>
    <property type="match status" value="1"/>
</dbReference>
<comment type="function">
    <text evidence="1">Binds as a heterodimer with protein bS6 to the central domain of the 16S rRNA, where it helps stabilize the platform of the 30S subunit.</text>
</comment>
<comment type="subunit">
    <text evidence="1">Part of the 30S ribosomal subunit. Forms a tight heterodimer with protein bS6.</text>
</comment>
<comment type="similarity">
    <text evidence="1">Belongs to the bacterial ribosomal protein bS18 family.</text>
</comment>
<name>RS18_POLNS</name>
<gene>
    <name evidence="1" type="primary">rpsR</name>
    <name type="ordered locus">Pnec_0430</name>
</gene>
<feature type="chain" id="PRO_1000114436" description="Small ribosomal subunit protein bS18">
    <location>
        <begin position="1"/>
        <end position="84"/>
    </location>
</feature>
<protein>
    <recommendedName>
        <fullName evidence="1">Small ribosomal subunit protein bS18</fullName>
    </recommendedName>
    <alternativeName>
        <fullName evidence="2">30S ribosomal protein S18</fullName>
    </alternativeName>
</protein>
<sequence length="84" mass="9661">MAFGKKPAQNPLFKRKRYCRFTVAGVEQIDYKDVDTLKGFIGENAKITPARLTGTKAKYQRQLDTAIKRARYLALLPFSDQHKK</sequence>
<reference key="1">
    <citation type="journal article" date="2013" name="Proc. Natl. Acad. Sci. U.S.A.">
        <title>Polynucleobacter necessarius, a model for genome reduction in both free-living and symbiotic bacteria.</title>
        <authorList>
            <person name="Boscaro V."/>
            <person name="Felletti M."/>
            <person name="Vannini C."/>
            <person name="Ackerman M.S."/>
            <person name="Chain P.S."/>
            <person name="Malfatti S."/>
            <person name="Vergez L.M."/>
            <person name="Shin M."/>
            <person name="Doak T.G."/>
            <person name="Lynch M."/>
            <person name="Petroni G."/>
        </authorList>
    </citation>
    <scope>NUCLEOTIDE SEQUENCE [LARGE SCALE GENOMIC DNA]</scope>
    <source>
        <strain>STIR1</strain>
    </source>
</reference>
<organism>
    <name type="scientific">Polynucleobacter necessarius subsp. necessarius (strain STIR1)</name>
    <dbReference type="NCBI Taxonomy" id="452638"/>
    <lineage>
        <taxon>Bacteria</taxon>
        <taxon>Pseudomonadati</taxon>
        <taxon>Pseudomonadota</taxon>
        <taxon>Betaproteobacteria</taxon>
        <taxon>Burkholderiales</taxon>
        <taxon>Burkholderiaceae</taxon>
        <taxon>Polynucleobacter</taxon>
    </lineage>
</organism>